<keyword id="KW-0150">Chloroplast</keyword>
<keyword id="KW-0240">DNA-directed RNA polymerase</keyword>
<keyword id="KW-0548">Nucleotidyltransferase</keyword>
<keyword id="KW-0934">Plastid</keyword>
<keyword id="KW-0804">Transcription</keyword>
<keyword id="KW-0808">Transferase</keyword>
<reference key="1">
    <citation type="journal article" date="2005" name="DNA Res.">
        <title>The complete plastid genome sequence of the haptophyte Emiliania huxleyi: a comparison to other plastid genomes.</title>
        <authorList>
            <person name="Sanchez-Puerta M.V."/>
            <person name="Bachvaroff T.R."/>
            <person name="Delwiche C.F."/>
        </authorList>
    </citation>
    <scope>NUCLEOTIDE SEQUENCE [LARGE SCALE GENOMIC DNA]</scope>
    <source>
        <strain>CCMP373 / CSIRO-CS-57 / BT6</strain>
    </source>
</reference>
<organism>
    <name type="scientific">Emiliania huxleyi</name>
    <name type="common">Coccolithophore</name>
    <name type="synonym">Pontosphaera huxleyi</name>
    <dbReference type="NCBI Taxonomy" id="2903"/>
    <lineage>
        <taxon>Eukaryota</taxon>
        <taxon>Haptista</taxon>
        <taxon>Haptophyta</taxon>
        <taxon>Prymnesiophyceae</taxon>
        <taxon>Isochrysidales</taxon>
        <taxon>Noelaerhabdaceae</taxon>
        <taxon>Emiliania</taxon>
    </lineage>
</organism>
<name>RPOA_EMIHU</name>
<sequence length="309" mass="34292">MFQVQCLESAQKAATENVAKFCIEPLSKGQGITIGNALRRTLLSNIPGTAIVGTRISGVDHEFSVIPGVKEDALEILLNLKQLVFKGNLNEPIITRLNIQGPCIVTAGDIDIPTDLELIDPQQYIATITDFSHLEMEFILEQGESYVLSEKTASNNPRGFLAVDAVFTPIKKVNFFVETSSSKERLEKERLIIEIETNGSILPLEALNLAAERLSSLFKLVNSADLTAEFPTEVENIVQVSQTDVTGVLIEELELSVRAYNCLKRAQIHTLGELLKYSKENLLEFKNFGQKSANEVCENLHERFNLTLN</sequence>
<protein>
    <recommendedName>
        <fullName evidence="1">DNA-directed RNA polymerase subunit alpha</fullName>
        <shortName evidence="1">PEP</shortName>
        <ecNumber evidence="1">2.7.7.6</ecNumber>
    </recommendedName>
    <alternativeName>
        <fullName evidence="1">Plastid-encoded RNA polymerase subunit alpha</fullName>
        <shortName evidence="1">RNA polymerase subunit alpha</shortName>
    </alternativeName>
</protein>
<evidence type="ECO:0000255" key="1">
    <source>
        <dbReference type="HAMAP-Rule" id="MF_00059"/>
    </source>
</evidence>
<feature type="chain" id="PRO_0000225920" description="DNA-directed RNA polymerase subunit alpha">
    <location>
        <begin position="1"/>
        <end position="309"/>
    </location>
</feature>
<feature type="region of interest" description="Alpha N-terminal domain (alpha-NTD)" evidence="1">
    <location>
        <begin position="1"/>
        <end position="225"/>
    </location>
</feature>
<feature type="region of interest" description="Alpha C-terminal domain (alpha-CTD)" evidence="1">
    <location>
        <begin position="237"/>
        <end position="309"/>
    </location>
</feature>
<accession>Q4G347</accession>
<dbReference type="EC" id="2.7.7.6" evidence="1"/>
<dbReference type="EMBL" id="AY741371">
    <property type="protein sequence ID" value="AAX13919.1"/>
    <property type="molecule type" value="Genomic_DNA"/>
</dbReference>
<dbReference type="RefSeq" id="YP_277420.1">
    <property type="nucleotide sequence ID" value="NC_007288.1"/>
</dbReference>
<dbReference type="SMR" id="Q4G347"/>
<dbReference type="STRING" id="2903.Q4G347"/>
<dbReference type="GeneID" id="3562523"/>
<dbReference type="GO" id="GO:0009507">
    <property type="term" value="C:chloroplast"/>
    <property type="evidence" value="ECO:0007669"/>
    <property type="project" value="UniProtKB-SubCell"/>
</dbReference>
<dbReference type="GO" id="GO:0000428">
    <property type="term" value="C:DNA-directed RNA polymerase complex"/>
    <property type="evidence" value="ECO:0007669"/>
    <property type="project" value="UniProtKB-KW"/>
</dbReference>
<dbReference type="GO" id="GO:0005739">
    <property type="term" value="C:mitochondrion"/>
    <property type="evidence" value="ECO:0007669"/>
    <property type="project" value="GOC"/>
</dbReference>
<dbReference type="GO" id="GO:0003677">
    <property type="term" value="F:DNA binding"/>
    <property type="evidence" value="ECO:0007669"/>
    <property type="project" value="UniProtKB-UniRule"/>
</dbReference>
<dbReference type="GO" id="GO:0003899">
    <property type="term" value="F:DNA-directed RNA polymerase activity"/>
    <property type="evidence" value="ECO:0007669"/>
    <property type="project" value="UniProtKB-UniRule"/>
</dbReference>
<dbReference type="GO" id="GO:0046983">
    <property type="term" value="F:protein dimerization activity"/>
    <property type="evidence" value="ECO:0007669"/>
    <property type="project" value="InterPro"/>
</dbReference>
<dbReference type="GO" id="GO:0006351">
    <property type="term" value="P:DNA-templated transcription"/>
    <property type="evidence" value="ECO:0007669"/>
    <property type="project" value="UniProtKB-UniRule"/>
</dbReference>
<dbReference type="CDD" id="cd06928">
    <property type="entry name" value="RNAP_alpha_NTD"/>
    <property type="match status" value="1"/>
</dbReference>
<dbReference type="FunFam" id="2.170.120.12:FF:000001">
    <property type="entry name" value="DNA-directed RNA polymerase subunit alpha"/>
    <property type="match status" value="1"/>
</dbReference>
<dbReference type="Gene3D" id="1.10.150.20">
    <property type="entry name" value="5' to 3' exonuclease, C-terminal subdomain"/>
    <property type="match status" value="1"/>
</dbReference>
<dbReference type="Gene3D" id="2.170.120.12">
    <property type="entry name" value="DNA-directed RNA polymerase, insert domain"/>
    <property type="match status" value="1"/>
</dbReference>
<dbReference type="Gene3D" id="3.30.1360.10">
    <property type="entry name" value="RNA polymerase, RBP11-like subunit"/>
    <property type="match status" value="1"/>
</dbReference>
<dbReference type="HAMAP" id="MF_00059">
    <property type="entry name" value="RNApol_bact_RpoA"/>
    <property type="match status" value="1"/>
</dbReference>
<dbReference type="InterPro" id="IPR011262">
    <property type="entry name" value="DNA-dir_RNA_pol_insert"/>
</dbReference>
<dbReference type="InterPro" id="IPR011263">
    <property type="entry name" value="DNA-dir_RNA_pol_RpoA/D/Rpb3"/>
</dbReference>
<dbReference type="InterPro" id="IPR011773">
    <property type="entry name" value="DNA-dir_RpoA"/>
</dbReference>
<dbReference type="InterPro" id="IPR036603">
    <property type="entry name" value="RBP11-like"/>
</dbReference>
<dbReference type="InterPro" id="IPR011260">
    <property type="entry name" value="RNAP_asu_C"/>
</dbReference>
<dbReference type="InterPro" id="IPR036643">
    <property type="entry name" value="RNApol_insert_sf"/>
</dbReference>
<dbReference type="NCBIfam" id="NF003519">
    <property type="entry name" value="PRK05182.2-5"/>
    <property type="match status" value="1"/>
</dbReference>
<dbReference type="NCBIfam" id="TIGR02027">
    <property type="entry name" value="rpoA"/>
    <property type="match status" value="1"/>
</dbReference>
<dbReference type="Pfam" id="PF01000">
    <property type="entry name" value="RNA_pol_A_bac"/>
    <property type="match status" value="1"/>
</dbReference>
<dbReference type="Pfam" id="PF03118">
    <property type="entry name" value="RNA_pol_A_CTD"/>
    <property type="match status" value="1"/>
</dbReference>
<dbReference type="Pfam" id="PF01193">
    <property type="entry name" value="RNA_pol_L"/>
    <property type="match status" value="1"/>
</dbReference>
<dbReference type="SMART" id="SM00662">
    <property type="entry name" value="RPOLD"/>
    <property type="match status" value="1"/>
</dbReference>
<dbReference type="SUPFAM" id="SSF47789">
    <property type="entry name" value="C-terminal domain of RNA polymerase alpha subunit"/>
    <property type="match status" value="1"/>
</dbReference>
<dbReference type="SUPFAM" id="SSF56553">
    <property type="entry name" value="Insert subdomain of RNA polymerase alpha subunit"/>
    <property type="match status" value="1"/>
</dbReference>
<dbReference type="SUPFAM" id="SSF55257">
    <property type="entry name" value="RBP11-like subunits of RNA polymerase"/>
    <property type="match status" value="1"/>
</dbReference>
<gene>
    <name evidence="1" type="primary">rpoA</name>
</gene>
<comment type="function">
    <text evidence="1">DNA-dependent RNA polymerase catalyzes the transcription of DNA into RNA using the four ribonucleoside triphosphates as substrates.</text>
</comment>
<comment type="catalytic activity">
    <reaction evidence="1">
        <text>RNA(n) + a ribonucleoside 5'-triphosphate = RNA(n+1) + diphosphate</text>
        <dbReference type="Rhea" id="RHEA:21248"/>
        <dbReference type="Rhea" id="RHEA-COMP:14527"/>
        <dbReference type="Rhea" id="RHEA-COMP:17342"/>
        <dbReference type="ChEBI" id="CHEBI:33019"/>
        <dbReference type="ChEBI" id="CHEBI:61557"/>
        <dbReference type="ChEBI" id="CHEBI:140395"/>
        <dbReference type="EC" id="2.7.7.6"/>
    </reaction>
</comment>
<comment type="subunit">
    <text evidence="1">In plastids the minimal PEP RNA polymerase catalytic core is composed of four subunits: alpha, beta, beta', and beta''. When a (nuclear-encoded) sigma factor is associated with the core the holoenzyme is formed, which can initiate transcription.</text>
</comment>
<comment type="subcellular location">
    <subcellularLocation>
        <location>Plastid</location>
        <location>Chloroplast</location>
    </subcellularLocation>
</comment>
<comment type="domain">
    <text evidence="1">The N-terminal domain is essential for RNAP assembly and basal transcription, whereas the C-terminal domain is involved in interaction with transcriptional regulators and with upstream promoter elements.</text>
</comment>
<comment type="similarity">
    <text evidence="1">Belongs to the RNA polymerase alpha chain family.</text>
</comment>
<geneLocation type="chloroplast"/>
<proteinExistence type="inferred from homology"/>